<proteinExistence type="evidence at transcript level"/>
<dbReference type="EC" id="5.6.2.-" evidence="4"/>
<dbReference type="EMBL" id="D50617">
    <property type="protein sequence ID" value="BAA09175.1"/>
    <property type="molecule type" value="Genomic_DNA"/>
</dbReference>
<dbReference type="EMBL" id="BK006940">
    <property type="protein sequence ID" value="DAA12375.1"/>
    <property type="molecule type" value="Genomic_DNA"/>
</dbReference>
<dbReference type="PIR" id="S56189">
    <property type="entry name" value="S56189"/>
</dbReference>
<dbReference type="RefSeq" id="NP_116589.1">
    <property type="nucleotide sequence ID" value="NM_001179901.1"/>
</dbReference>
<dbReference type="BioGRID" id="31082">
    <property type="interactions" value="4"/>
</dbReference>
<dbReference type="DIP" id="DIP-2599N"/>
<dbReference type="FunCoup" id="P43538">
    <property type="interactions" value="94"/>
</dbReference>
<dbReference type="IntAct" id="P43538">
    <property type="interactions" value="2"/>
</dbReference>
<dbReference type="MINT" id="P43538"/>
<dbReference type="STRING" id="4932.YFL066C"/>
<dbReference type="PaxDb" id="4932-YFL066C"/>
<dbReference type="PeptideAtlas" id="P43538"/>
<dbReference type="TopDownProteomics" id="P43538"/>
<dbReference type="EnsemblFungi" id="YFL066C_mRNA">
    <property type="protein sequence ID" value="YFL066C"/>
    <property type="gene ID" value="YFL066C"/>
</dbReference>
<dbReference type="GeneID" id="850478"/>
<dbReference type="KEGG" id="sce:YFL066C"/>
<dbReference type="AGR" id="SGD:S000001828"/>
<dbReference type="SGD" id="S000001828">
    <property type="gene designation" value="YFL066C"/>
</dbReference>
<dbReference type="VEuPathDB" id="FungiDB:YFL066C"/>
<dbReference type="GeneTree" id="ENSGT00940000153173"/>
<dbReference type="HOGENOM" id="CLU_034495_0_0_1"/>
<dbReference type="InParanoid" id="P43538"/>
<dbReference type="OMA" id="QHVGCCV"/>
<dbReference type="OrthoDB" id="4070089at2759"/>
<dbReference type="BioCyc" id="YEAST:G3O-30402-MONOMER"/>
<dbReference type="PRO" id="PR:P43538"/>
<dbReference type="Proteomes" id="UP000002311">
    <property type="component" value="Chromosome VI"/>
</dbReference>
<dbReference type="RNAct" id="P43538">
    <property type="molecule type" value="protein"/>
</dbReference>
<dbReference type="GO" id="GO:0005634">
    <property type="term" value="C:nucleus"/>
    <property type="evidence" value="ECO:0007005"/>
    <property type="project" value="SGD"/>
</dbReference>
<dbReference type="GO" id="GO:0005524">
    <property type="term" value="F:ATP binding"/>
    <property type="evidence" value="ECO:0007669"/>
    <property type="project" value="UniProtKB-KW"/>
</dbReference>
<dbReference type="GO" id="GO:0016887">
    <property type="term" value="F:ATP hydrolysis activity"/>
    <property type="evidence" value="ECO:0007669"/>
    <property type="project" value="RHEA"/>
</dbReference>
<dbReference type="GO" id="GO:0004386">
    <property type="term" value="F:helicase activity"/>
    <property type="evidence" value="ECO:0007669"/>
    <property type="project" value="UniProtKB-KW"/>
</dbReference>
<dbReference type="GO" id="GO:0003676">
    <property type="term" value="F:nucleic acid binding"/>
    <property type="evidence" value="ECO:0007669"/>
    <property type="project" value="InterPro"/>
</dbReference>
<dbReference type="FunFam" id="3.40.50.300:FF:001914">
    <property type="entry name" value="YML133C-like protein"/>
    <property type="match status" value="1"/>
</dbReference>
<dbReference type="FunFam" id="3.40.50.300:FF:002410">
    <property type="entry name" value="YML133C-like protein"/>
    <property type="match status" value="1"/>
</dbReference>
<dbReference type="Gene3D" id="3.40.50.300">
    <property type="entry name" value="P-loop containing nucleotide triphosphate hydrolases"/>
    <property type="match status" value="2"/>
</dbReference>
<dbReference type="InterPro" id="IPR011545">
    <property type="entry name" value="DEAD/DEAH_box_helicase_dom"/>
</dbReference>
<dbReference type="InterPro" id="IPR001650">
    <property type="entry name" value="Helicase_C-like"/>
</dbReference>
<dbReference type="InterPro" id="IPR027417">
    <property type="entry name" value="P-loop_NTPase"/>
</dbReference>
<dbReference type="InterPro" id="IPR051363">
    <property type="entry name" value="RLR_Helicase"/>
</dbReference>
<dbReference type="PANTHER" id="PTHR14074:SF39">
    <property type="entry name" value="FANCONI ANEMIA GROUP M PROTEIN"/>
    <property type="match status" value="1"/>
</dbReference>
<dbReference type="PANTHER" id="PTHR14074">
    <property type="entry name" value="HELICASE WITH DEATH DOMAIN-RELATED"/>
    <property type="match status" value="1"/>
</dbReference>
<dbReference type="Pfam" id="PF00270">
    <property type="entry name" value="DEAD"/>
    <property type="match status" value="1"/>
</dbReference>
<dbReference type="Pfam" id="PF00271">
    <property type="entry name" value="Helicase_C"/>
    <property type="match status" value="1"/>
</dbReference>
<dbReference type="SMART" id="SM00490">
    <property type="entry name" value="HELICc"/>
    <property type="match status" value="1"/>
</dbReference>
<dbReference type="SUPFAM" id="SSF52540">
    <property type="entry name" value="P-loop containing nucleoside triphosphate hydrolases"/>
    <property type="match status" value="1"/>
</dbReference>
<dbReference type="PROSITE" id="PS51192">
    <property type="entry name" value="HELICASE_ATP_BIND_1"/>
    <property type="match status" value="1"/>
</dbReference>
<dbReference type="PROSITE" id="PS51194">
    <property type="entry name" value="HELICASE_CTER"/>
    <property type="match status" value="1"/>
</dbReference>
<comment type="function">
    <text evidence="4">Catalyzes DNA unwinding and is involved in telomerase-independent telomere maintenance.</text>
</comment>
<comment type="induction">
    <text evidence="4">Induced in absence of telomerase TLC1.</text>
</comment>
<comment type="similarity">
    <text evidence="3">Belongs to the helicase family. Yeast subtelomeric Y' repeat subfamily.</text>
</comment>
<organism>
    <name type="scientific">Saccharomyces cerevisiae (strain ATCC 204508 / S288c)</name>
    <name type="common">Baker's yeast</name>
    <dbReference type="NCBI Taxonomy" id="559292"/>
    <lineage>
        <taxon>Eukaryota</taxon>
        <taxon>Fungi</taxon>
        <taxon>Dikarya</taxon>
        <taxon>Ascomycota</taxon>
        <taxon>Saccharomycotina</taxon>
        <taxon>Saccharomycetes</taxon>
        <taxon>Saccharomycetales</taxon>
        <taxon>Saccharomycetaceae</taxon>
        <taxon>Saccharomyces</taxon>
    </lineage>
</organism>
<gene>
    <name type="ordered locus">YFL066C</name>
</gene>
<keyword id="KW-0067">ATP-binding</keyword>
<keyword id="KW-0347">Helicase</keyword>
<keyword id="KW-0378">Hydrolase</keyword>
<keyword id="KW-0413">Isomerase</keyword>
<keyword id="KW-0547">Nucleotide-binding</keyword>
<keyword id="KW-1185">Reference proteome</keyword>
<protein>
    <recommendedName>
        <fullName>Y' element ATP-dependent helicase YFL066C</fullName>
        <ecNumber evidence="4">5.6.2.-</ecNumber>
    </recommendedName>
</protein>
<evidence type="ECO:0000255" key="1">
    <source>
        <dbReference type="PROSITE-ProRule" id="PRU00541"/>
    </source>
</evidence>
<evidence type="ECO:0000255" key="2">
    <source>
        <dbReference type="PROSITE-ProRule" id="PRU00542"/>
    </source>
</evidence>
<evidence type="ECO:0000305" key="3"/>
<evidence type="ECO:0000305" key="4">
    <source>
    </source>
</evidence>
<sequence>MADTPSVAVQAPPGYGKTELFHLPLIALASKGDVKYVSFLFVPYTVLLANCMIRLGRRGCLNVAPVRNFIEEGYDGVTDLYVGIYDDLASTNFTDRIAAWENIVECTFRTNNVKLGYLIVDEFHNFETEVYRQSQFGGITNLDFDAFEKAIFLSGTAPEAVADAALQRIGLTGLAKKSMDINELKRSEDLSRGLSSYPTRMFNLIKEKSEVPLGHVHKIWKKVESQPEEALKLLLALFEIEPESKAIVVASTTNEVEELACSWRKYFRVVWIHGKLGAAEKVSRTKEFVTDGSMQVLIGTKLVTEGIDIKQLMMVIMLDNRLNIIELIQGVGRLRDGGLCYLLSRKNSWAARNRKGELPPIKEGCITEQVREFYGLESKKGKKGQHVGCCVC</sequence>
<feature type="chain" id="PRO_0000102206" description="Y' element ATP-dependent helicase YFL066C">
    <location>
        <begin position="1"/>
        <end position="392"/>
    </location>
</feature>
<feature type="domain" description="Helicase ATP-binding" evidence="1">
    <location>
        <begin position="1"/>
        <end position="175"/>
    </location>
</feature>
<feature type="domain" description="Helicase C-terminal" evidence="2">
    <location>
        <begin position="232"/>
        <end position="381"/>
    </location>
</feature>
<feature type="binding site" evidence="1">
    <location>
        <begin position="11"/>
        <end position="18"/>
    </location>
    <ligand>
        <name>ATP</name>
        <dbReference type="ChEBI" id="CHEBI:30616"/>
    </ligand>
</feature>
<name>YFG6_YEAST</name>
<reference key="1">
    <citation type="journal article" date="1995" name="Nat. Genet.">
        <title>Analysis of the nucleotide sequence of chromosome VI from Saccharomyces cerevisiae.</title>
        <authorList>
            <person name="Murakami Y."/>
            <person name="Naitou M."/>
            <person name="Hagiwara H."/>
            <person name="Shibata T."/>
            <person name="Ozawa M."/>
            <person name="Sasanuma S."/>
            <person name="Sasanuma M."/>
            <person name="Tsuchiya Y."/>
            <person name="Soeda E."/>
            <person name="Yokoyama K."/>
            <person name="Yamazaki M."/>
            <person name="Tashiro H."/>
            <person name="Eki T."/>
        </authorList>
    </citation>
    <scope>NUCLEOTIDE SEQUENCE [LARGE SCALE GENOMIC DNA]</scope>
    <source>
        <strain>ATCC 204508 / S288c</strain>
    </source>
</reference>
<reference key="2">
    <citation type="journal article" date="2014" name="G3 (Bethesda)">
        <title>The reference genome sequence of Saccharomyces cerevisiae: Then and now.</title>
        <authorList>
            <person name="Engel S.R."/>
            <person name="Dietrich F.S."/>
            <person name="Fisk D.G."/>
            <person name="Binkley G."/>
            <person name="Balakrishnan R."/>
            <person name="Costanzo M.C."/>
            <person name="Dwight S.S."/>
            <person name="Hitz B.C."/>
            <person name="Karra K."/>
            <person name="Nash R.S."/>
            <person name="Weng S."/>
            <person name="Wong E.D."/>
            <person name="Lloyd P."/>
            <person name="Skrzypek M.S."/>
            <person name="Miyasato S.R."/>
            <person name="Simison M."/>
            <person name="Cherry J.M."/>
        </authorList>
    </citation>
    <scope>GENOME REANNOTATION</scope>
    <source>
        <strain>ATCC 204508 / S288c</strain>
    </source>
</reference>
<reference key="3">
    <citation type="journal article" date="1998" name="J. Biol. Chem.">
        <title>Y'-Help1, a DNA helicase encoded by the yeast subtelomeric Y' element, is induced in survivors defective for telomerase.</title>
        <authorList>
            <person name="Yamada M."/>
            <person name="Hayatsu N."/>
            <person name="Matsuura A."/>
            <person name="Ishikawa F."/>
        </authorList>
    </citation>
    <scope>FUNCTION</scope>
    <scope>INDUCTION</scope>
</reference>
<accession>P43538</accession>
<accession>D6VTG5</accession>